<proteinExistence type="inferred from homology"/>
<evidence type="ECO:0000250" key="1"/>
<evidence type="ECO:0000250" key="2">
    <source>
        <dbReference type="UniProtKB" id="P0A8T7"/>
    </source>
</evidence>
<evidence type="ECO:0000305" key="3"/>
<keyword id="KW-0240">DNA-directed RNA polymerase</keyword>
<keyword id="KW-0460">Magnesium</keyword>
<keyword id="KW-0479">Metal-binding</keyword>
<keyword id="KW-0548">Nucleotidyltransferase</keyword>
<keyword id="KW-0804">Transcription</keyword>
<keyword id="KW-0808">Transferase</keyword>
<feature type="chain" id="PRO_0000067753" description="DNA-directed RNA polymerase subunit beta'">
    <location>
        <begin position="1" status="less than"/>
        <end position="989" status="greater than"/>
    </location>
</feature>
<feature type="binding site" evidence="2">
    <location>
        <position position="383"/>
    </location>
    <ligand>
        <name>Mg(2+)</name>
        <dbReference type="ChEBI" id="CHEBI:18420"/>
    </ligand>
</feature>
<feature type="binding site" evidence="2">
    <location>
        <position position="385"/>
    </location>
    <ligand>
        <name>Mg(2+)</name>
        <dbReference type="ChEBI" id="CHEBI:18420"/>
    </ligand>
</feature>
<feature type="binding site" evidence="2">
    <location>
        <position position="387"/>
    </location>
    <ligand>
        <name>Mg(2+)</name>
        <dbReference type="ChEBI" id="CHEBI:18420"/>
    </ligand>
</feature>
<feature type="non-terminal residue">
    <location>
        <position position="1"/>
    </location>
</feature>
<feature type="non-terminal residue">
    <location>
        <position position="989"/>
    </location>
</feature>
<gene>
    <name type="primary">rpoC</name>
</gene>
<organism>
    <name type="scientific">Leuconostoc pseudomesenteroides</name>
    <dbReference type="NCBI Taxonomy" id="33968"/>
    <lineage>
        <taxon>Bacteria</taxon>
        <taxon>Bacillati</taxon>
        <taxon>Bacillota</taxon>
        <taxon>Bacilli</taxon>
        <taxon>Lactobacillales</taxon>
        <taxon>Lactobacillaceae</taxon>
        <taxon>Leuconostoc</taxon>
    </lineage>
</organism>
<sequence length="989" mass="109915">RIRYKGIVCDRCGVEVTSSKVRRERMGHIELAAPVTHIWYFKGIPSRMGLVLDMSPRSLEEIIYFASYVVIEPGDAPVEKKQMVTEREYRQLKKEYGAGFKAGMGAEAIKELLANVDLAGERDELKRELQEATGQKRVRAVRRLDIVEAFLQSDNKPEWMVMDVVPVIPPDLRPMVQLEGGRFATSDLNDLYRRVINRNNRLKRLLDLNAPGIIVQNEKRMLQEAVDALIDNGRRGRPVAGPGNRPLKSLSHMLKGKQGRFRQNLLGKRVDYSGRSVIDVGPFLKMNQMGLPVPMAIELFRPFIMKELTTRKLAGNVKSAKRKIDKADGDVMDVLEDVIKEHPVLLNRAPTLHRLGIQAFEPVLVSGKAMRLHPLVTEAYNADFDGDQMAIHVPLSDEAQAEARLLMLAAGHILAPKDGKPIVAPSQDMVIGNYYLTTEEAGREGEGMIFSGVDEARIAFARKVVHYHTRVGIQTSSFPAEKPFTDEQRSKVMVTSVGKLIFNEILPTDFPFINEPSEDNFKGVDDRFFIESGEDIHDYLAETPIIGAFKKGFLSDIIAEVYKRYKVTETSLLLDRMKDLGYEKSTESGLTVAMTDVTDLKEKPAILEDAHNQVATVTKQFRRGLITDDERYQRVTEIWTKAKDIIQDKLIESFEPTNPIFMMQDSGARGNISNFVQLAGMRGLMAGPGGKIIELPVTANFREGLTVMEMFISTHGARKGMSDTALKTANSGYLTRRLVDVAQDVIVREFDNDSDRGVAVKAIMDGTSVVEPLYDRILGRYAMKSVFDPETGEKIVSRNEMIDEDVAKAIVNAGIEEVTIRSVFTSTTEHGVSVLDYGRNLASGEEVEVGEAVGTVAAQSIGEPGTQLTMRNFHTGGVAGGNDITQGLPRVQEIVEARIPKGRAEISEVTGVVTAIEENPAERTKAVTIEGETDTRTYTLPLTARMRFAEGDEIQRGDAINEGPIDPKELLAVTDTLTTESYMLTEIQK</sequence>
<dbReference type="EC" id="2.7.7.6"/>
<dbReference type="EMBL" id="X95812">
    <property type="protein sequence ID" value="CAA65079.1"/>
    <property type="molecule type" value="Genomic_DNA"/>
</dbReference>
<dbReference type="SMR" id="P94899"/>
<dbReference type="STRING" id="33968.BMS77_08340"/>
<dbReference type="eggNOG" id="COG0086">
    <property type="taxonomic scope" value="Bacteria"/>
</dbReference>
<dbReference type="GO" id="GO:0000428">
    <property type="term" value="C:DNA-directed RNA polymerase complex"/>
    <property type="evidence" value="ECO:0007669"/>
    <property type="project" value="UniProtKB-KW"/>
</dbReference>
<dbReference type="GO" id="GO:0003677">
    <property type="term" value="F:DNA binding"/>
    <property type="evidence" value="ECO:0007669"/>
    <property type="project" value="InterPro"/>
</dbReference>
<dbReference type="GO" id="GO:0003899">
    <property type="term" value="F:DNA-directed RNA polymerase activity"/>
    <property type="evidence" value="ECO:0007669"/>
    <property type="project" value="UniProtKB-EC"/>
</dbReference>
<dbReference type="GO" id="GO:0046872">
    <property type="term" value="F:metal ion binding"/>
    <property type="evidence" value="ECO:0007669"/>
    <property type="project" value="UniProtKB-KW"/>
</dbReference>
<dbReference type="GO" id="GO:0006351">
    <property type="term" value="P:DNA-templated transcription"/>
    <property type="evidence" value="ECO:0007669"/>
    <property type="project" value="InterPro"/>
</dbReference>
<dbReference type="CDD" id="cd01609">
    <property type="entry name" value="RNAP_beta'_N"/>
    <property type="match status" value="1"/>
</dbReference>
<dbReference type="Gene3D" id="1.10.132.30">
    <property type="match status" value="1"/>
</dbReference>
<dbReference type="Gene3D" id="1.10.1790.20">
    <property type="match status" value="1"/>
</dbReference>
<dbReference type="Gene3D" id="1.10.40.90">
    <property type="match status" value="1"/>
</dbReference>
<dbReference type="Gene3D" id="2.40.40.20">
    <property type="match status" value="1"/>
</dbReference>
<dbReference type="Gene3D" id="2.40.50.100">
    <property type="match status" value="1"/>
</dbReference>
<dbReference type="Gene3D" id="4.10.860.120">
    <property type="entry name" value="RNA polymerase II, clamp domain"/>
    <property type="match status" value="1"/>
</dbReference>
<dbReference type="Gene3D" id="1.10.274.100">
    <property type="entry name" value="RNA polymerase Rpb1, domain 3"/>
    <property type="match status" value="1"/>
</dbReference>
<dbReference type="InterPro" id="IPR045867">
    <property type="entry name" value="DNA-dir_RpoC_beta_prime"/>
</dbReference>
<dbReference type="InterPro" id="IPR012754">
    <property type="entry name" value="DNA-dir_RpoC_beta_prime_bact"/>
</dbReference>
<dbReference type="InterPro" id="IPR000722">
    <property type="entry name" value="RNA_pol_asu"/>
</dbReference>
<dbReference type="InterPro" id="IPR006592">
    <property type="entry name" value="RNA_pol_N"/>
</dbReference>
<dbReference type="InterPro" id="IPR007080">
    <property type="entry name" value="RNA_pol_Rpb1_1"/>
</dbReference>
<dbReference type="InterPro" id="IPR007066">
    <property type="entry name" value="RNA_pol_Rpb1_3"/>
</dbReference>
<dbReference type="InterPro" id="IPR042102">
    <property type="entry name" value="RNA_pol_Rpb1_3_sf"/>
</dbReference>
<dbReference type="InterPro" id="IPR007083">
    <property type="entry name" value="RNA_pol_Rpb1_4"/>
</dbReference>
<dbReference type="InterPro" id="IPR007081">
    <property type="entry name" value="RNA_pol_Rpb1_5"/>
</dbReference>
<dbReference type="InterPro" id="IPR044893">
    <property type="entry name" value="RNA_pol_Rpb1_clamp_domain"/>
</dbReference>
<dbReference type="InterPro" id="IPR038120">
    <property type="entry name" value="Rpb1_funnel_sf"/>
</dbReference>
<dbReference type="NCBIfam" id="TIGR02386">
    <property type="entry name" value="rpoC_TIGR"/>
    <property type="match status" value="1"/>
</dbReference>
<dbReference type="PANTHER" id="PTHR19376">
    <property type="entry name" value="DNA-DIRECTED RNA POLYMERASE"/>
    <property type="match status" value="1"/>
</dbReference>
<dbReference type="PANTHER" id="PTHR19376:SF54">
    <property type="entry name" value="DNA-DIRECTED RNA POLYMERASE SUBUNIT BETA"/>
    <property type="match status" value="1"/>
</dbReference>
<dbReference type="Pfam" id="PF04997">
    <property type="entry name" value="RNA_pol_Rpb1_1"/>
    <property type="match status" value="1"/>
</dbReference>
<dbReference type="Pfam" id="PF00623">
    <property type="entry name" value="RNA_pol_Rpb1_2"/>
    <property type="match status" value="1"/>
</dbReference>
<dbReference type="Pfam" id="PF04983">
    <property type="entry name" value="RNA_pol_Rpb1_3"/>
    <property type="match status" value="1"/>
</dbReference>
<dbReference type="Pfam" id="PF05000">
    <property type="entry name" value="RNA_pol_Rpb1_4"/>
    <property type="match status" value="1"/>
</dbReference>
<dbReference type="Pfam" id="PF04998">
    <property type="entry name" value="RNA_pol_Rpb1_5"/>
    <property type="match status" value="1"/>
</dbReference>
<dbReference type="SMART" id="SM00663">
    <property type="entry name" value="RPOLA_N"/>
    <property type="match status" value="1"/>
</dbReference>
<dbReference type="SUPFAM" id="SSF64484">
    <property type="entry name" value="beta and beta-prime subunits of DNA dependent RNA-polymerase"/>
    <property type="match status" value="1"/>
</dbReference>
<protein>
    <recommendedName>
        <fullName evidence="3">DNA-directed RNA polymerase subunit beta'</fullName>
        <shortName>RNAP subunit beta'</shortName>
        <ecNumber>2.7.7.6</ecNumber>
    </recommendedName>
    <alternativeName>
        <fullName>RNA polymerase subunit beta'</fullName>
    </alternativeName>
    <alternativeName>
        <fullName>Transcriptase subunit beta'</fullName>
    </alternativeName>
</protein>
<reference key="1">
    <citation type="journal article" date="1996" name="Int. J. Syst. Bacteriol.">
        <title>Analysis of the beta' subunit of DNA-dependent RNA polymerase does not support the hypothesis inferred from 16S rRNA analysis that Oenococcus oeni (formerly Leuconostoc oenos) is a tachytelic (fast-evolving) bacterium.</title>
        <authorList>
            <person name="Morse R."/>
            <person name="Collins M.D."/>
            <person name="O'Hanlon K."/>
            <person name="Wallbanks S."/>
            <person name="Richardson P.T."/>
        </authorList>
    </citation>
    <scope>NUCLEOTIDE SEQUENCE [GENOMIC DNA]</scope>
    <source>
        <strain>ATCC 12291 / DSM 20193 / JCM 696 / NCDO 768 / NCIMB 8699 / NCFB 768 / 39</strain>
    </source>
</reference>
<comment type="function">
    <text evidence="1">DNA-dependent RNA polymerase catalyzes the transcription of DNA into RNA using the four ribonucleoside triphosphates as substrates.</text>
</comment>
<comment type="catalytic activity">
    <reaction evidence="2">
        <text>RNA(n) + a ribonucleoside 5'-triphosphate = RNA(n+1) + diphosphate</text>
        <dbReference type="Rhea" id="RHEA:21248"/>
        <dbReference type="Rhea" id="RHEA-COMP:14527"/>
        <dbReference type="Rhea" id="RHEA-COMP:17342"/>
        <dbReference type="ChEBI" id="CHEBI:33019"/>
        <dbReference type="ChEBI" id="CHEBI:61557"/>
        <dbReference type="ChEBI" id="CHEBI:140395"/>
        <dbReference type="EC" id="2.7.7.6"/>
    </reaction>
</comment>
<comment type="cofactor">
    <cofactor evidence="2">
        <name>Mg(2+)</name>
        <dbReference type="ChEBI" id="CHEBI:18420"/>
    </cofactor>
    <text evidence="2">Binds 1 Mg(2+) ion per subunit.</text>
</comment>
<comment type="subunit">
    <text evidence="1">The RNAP catalytic core consists of 2 alpha, 1 beta, 1 beta' and 1 omega subunit. When a sigma factor is associated with the core the holoenzyme is formed, which can initiate transcription (By similarity).</text>
</comment>
<comment type="similarity">
    <text evidence="3">Belongs to the RNA polymerase beta' chain family.</text>
</comment>
<name>RPOC_LEUPS</name>
<accession>P94899</accession>